<comment type="function">
    <text evidence="1">Accelerates the degradation of transcripts by removing pyrophosphate from the 5'-end of triphosphorylated RNA, leading to a more labile monophosphorylated state that can stimulate subsequent ribonuclease cleavage.</text>
</comment>
<comment type="cofactor">
    <cofactor evidence="1">
        <name>a divalent metal cation</name>
        <dbReference type="ChEBI" id="CHEBI:60240"/>
    </cofactor>
</comment>
<comment type="similarity">
    <text evidence="1">Belongs to the Nudix hydrolase family. RppH subfamily.</text>
</comment>
<name>RPPH_ECOUT</name>
<organism>
    <name type="scientific">Escherichia coli (strain UTI89 / UPEC)</name>
    <dbReference type="NCBI Taxonomy" id="364106"/>
    <lineage>
        <taxon>Bacteria</taxon>
        <taxon>Pseudomonadati</taxon>
        <taxon>Pseudomonadota</taxon>
        <taxon>Gammaproteobacteria</taxon>
        <taxon>Enterobacterales</taxon>
        <taxon>Enterobacteriaceae</taxon>
        <taxon>Escherichia</taxon>
    </lineage>
</organism>
<keyword id="KW-0378">Hydrolase</keyword>
<gene>
    <name evidence="1" type="primary">rppH</name>
    <name evidence="1" type="synonym">nudH</name>
    <name type="ordered locus">UTI89_C3232</name>
</gene>
<proteinExistence type="inferred from homology"/>
<accession>Q1R7I3</accession>
<evidence type="ECO:0000255" key="1">
    <source>
        <dbReference type="HAMAP-Rule" id="MF_00298"/>
    </source>
</evidence>
<protein>
    <recommendedName>
        <fullName evidence="1">RNA pyrophosphohydrolase</fullName>
        <ecNumber evidence="1">3.6.1.-</ecNumber>
    </recommendedName>
    <alternativeName>
        <fullName evidence="1">(Di)nucleoside polyphosphate hydrolase</fullName>
    </alternativeName>
</protein>
<feature type="chain" id="PRO_1000021942" description="RNA pyrophosphohydrolase">
    <location>
        <begin position="1"/>
        <end position="176"/>
    </location>
</feature>
<feature type="domain" description="Nudix hydrolase" evidence="1">
    <location>
        <begin position="6"/>
        <end position="149"/>
    </location>
</feature>
<feature type="short sequence motif" description="Nudix box">
    <location>
        <begin position="38"/>
        <end position="59"/>
    </location>
</feature>
<dbReference type="EC" id="3.6.1.-" evidence="1"/>
<dbReference type="EMBL" id="CP000243">
    <property type="protein sequence ID" value="ABE08681.1"/>
    <property type="molecule type" value="Genomic_DNA"/>
</dbReference>
<dbReference type="RefSeq" id="WP_000564489.1">
    <property type="nucleotide sequence ID" value="NZ_CP064825.1"/>
</dbReference>
<dbReference type="SMR" id="Q1R7I3"/>
<dbReference type="GeneID" id="75203778"/>
<dbReference type="KEGG" id="eci:UTI89_C3232"/>
<dbReference type="HOGENOM" id="CLU_087195_3_2_6"/>
<dbReference type="Proteomes" id="UP000001952">
    <property type="component" value="Chromosome"/>
</dbReference>
<dbReference type="GO" id="GO:0005737">
    <property type="term" value="C:cytoplasm"/>
    <property type="evidence" value="ECO:0007669"/>
    <property type="project" value="TreeGrafter"/>
</dbReference>
<dbReference type="GO" id="GO:0034353">
    <property type="term" value="F:mRNA 5'-diphosphatase activity"/>
    <property type="evidence" value="ECO:0007669"/>
    <property type="project" value="TreeGrafter"/>
</dbReference>
<dbReference type="GO" id="GO:0006402">
    <property type="term" value="P:mRNA catabolic process"/>
    <property type="evidence" value="ECO:0007669"/>
    <property type="project" value="TreeGrafter"/>
</dbReference>
<dbReference type="CDD" id="cd03671">
    <property type="entry name" value="NUDIX_Ap4A_hydrolase_plant_like"/>
    <property type="match status" value="1"/>
</dbReference>
<dbReference type="FunFam" id="3.90.79.10:FF:000001">
    <property type="entry name" value="RNA pyrophosphohydrolase"/>
    <property type="match status" value="1"/>
</dbReference>
<dbReference type="Gene3D" id="3.90.79.10">
    <property type="entry name" value="Nucleoside Triphosphate Pyrophosphohydrolase"/>
    <property type="match status" value="1"/>
</dbReference>
<dbReference type="HAMAP" id="MF_00298">
    <property type="entry name" value="Nudix_RppH"/>
    <property type="match status" value="1"/>
</dbReference>
<dbReference type="InterPro" id="IPR020476">
    <property type="entry name" value="Nudix_hydrolase"/>
</dbReference>
<dbReference type="InterPro" id="IPR015797">
    <property type="entry name" value="NUDIX_hydrolase-like_dom_sf"/>
</dbReference>
<dbReference type="InterPro" id="IPR020084">
    <property type="entry name" value="NUDIX_hydrolase_CS"/>
</dbReference>
<dbReference type="InterPro" id="IPR000086">
    <property type="entry name" value="NUDIX_hydrolase_dom"/>
</dbReference>
<dbReference type="InterPro" id="IPR022927">
    <property type="entry name" value="RppH"/>
</dbReference>
<dbReference type="NCBIfam" id="NF001934">
    <property type="entry name" value="PRK00714.1-1"/>
    <property type="match status" value="1"/>
</dbReference>
<dbReference type="NCBIfam" id="NF001937">
    <property type="entry name" value="PRK00714.1-4"/>
    <property type="match status" value="1"/>
</dbReference>
<dbReference type="NCBIfam" id="NF001938">
    <property type="entry name" value="PRK00714.1-5"/>
    <property type="match status" value="1"/>
</dbReference>
<dbReference type="PANTHER" id="PTHR23114">
    <property type="entry name" value="M7GPPPN-MRNA HYDROLASE"/>
    <property type="match status" value="1"/>
</dbReference>
<dbReference type="PANTHER" id="PTHR23114:SF17">
    <property type="entry name" value="M7GPPPN-MRNA HYDROLASE"/>
    <property type="match status" value="1"/>
</dbReference>
<dbReference type="Pfam" id="PF00293">
    <property type="entry name" value="NUDIX"/>
    <property type="match status" value="1"/>
</dbReference>
<dbReference type="PRINTS" id="PR00502">
    <property type="entry name" value="NUDIXFAMILY"/>
</dbReference>
<dbReference type="SUPFAM" id="SSF55811">
    <property type="entry name" value="Nudix"/>
    <property type="match status" value="1"/>
</dbReference>
<dbReference type="PROSITE" id="PS51462">
    <property type="entry name" value="NUDIX"/>
    <property type="match status" value="1"/>
</dbReference>
<dbReference type="PROSITE" id="PS00893">
    <property type="entry name" value="NUDIX_BOX"/>
    <property type="match status" value="1"/>
</dbReference>
<sequence>MIDDDGYRPNVGIVICNRQGQVMWARRFGQHSWQFPQGGINPGESAEQAMYRELFEEVGLSRKDVRILASTRNWLRYKLPKRLVRWDTKPVCIGQKQKWFLLQLVSGDAEINMQTSSTPEFDGWRWVSYWYPVRQVVSFKRDVYRRVMKEFASVVMSLQENTPKPQNASAYRRKRG</sequence>
<reference key="1">
    <citation type="journal article" date="2006" name="Proc. Natl. Acad. Sci. U.S.A.">
        <title>Identification of genes subject to positive selection in uropathogenic strains of Escherichia coli: a comparative genomics approach.</title>
        <authorList>
            <person name="Chen S.L."/>
            <person name="Hung C.-S."/>
            <person name="Xu J."/>
            <person name="Reigstad C.S."/>
            <person name="Magrini V."/>
            <person name="Sabo A."/>
            <person name="Blasiar D."/>
            <person name="Bieri T."/>
            <person name="Meyer R.R."/>
            <person name="Ozersky P."/>
            <person name="Armstrong J.R."/>
            <person name="Fulton R.S."/>
            <person name="Latreille J.P."/>
            <person name="Spieth J."/>
            <person name="Hooton T.M."/>
            <person name="Mardis E.R."/>
            <person name="Hultgren S.J."/>
            <person name="Gordon J.I."/>
        </authorList>
    </citation>
    <scope>NUCLEOTIDE SEQUENCE [LARGE SCALE GENOMIC DNA]</scope>
    <source>
        <strain>UTI89 / UPEC</strain>
    </source>
</reference>